<sequence length="387" mass="41285">MAMAEMATKSSLSAKLTLPSSSTKKTLSLRQVSVSLPTSTSISLLSLFASPPHEAKAAVSIPKDQIVSSLTEVEKTINQVQETGSSVFDATQRVFQVVGDALKPALDTALPIAKQAGEEAMKLASPAFSEASKKAQEAMQSSGFDSEPVFNAAKTVTDVAQQTSKAIEDAKPIASSTMDTISSADPSVIVVAAGAAFLAYLLLPPVFSAISFNFRGYKGDLTPAQTLDLLCTKNYLMVDIRSEKDKEKAGIPRLPSNAKNRVISIPLEELPNKVKGIVRNSKRVEAEIAALKISYLKKINKGSNIIILDSYTDSAKIVAKTLKVLGYKNCYIVTDGFSGGRGWLQSRLGTDSYNFSFAQVLSPSRIIPAASRSFGTRSGTKFLPSSD</sequence>
<gene>
    <name type="primary">CAS</name>
    <name type="synonym">STR3</name>
    <name type="ordered locus">At5g23060</name>
    <name type="ORF">MYJ24.5</name>
</gene>
<accession>Q9FN48</accession>
<dbReference type="EMBL" id="AY341888">
    <property type="protein sequence ID" value="AAQ73179.1"/>
    <property type="molecule type" value="mRNA"/>
</dbReference>
<dbReference type="EMBL" id="AB006708">
    <property type="protein sequence ID" value="BAB09823.1"/>
    <property type="molecule type" value="Genomic_DNA"/>
</dbReference>
<dbReference type="EMBL" id="CP002688">
    <property type="protein sequence ID" value="AED93114.1"/>
    <property type="molecule type" value="Genomic_DNA"/>
</dbReference>
<dbReference type="EMBL" id="AY045798">
    <property type="protein sequence ID" value="AAK76472.1"/>
    <property type="molecule type" value="mRNA"/>
</dbReference>
<dbReference type="EMBL" id="AY079331">
    <property type="protein sequence ID" value="AAL85062.1"/>
    <property type="molecule type" value="mRNA"/>
</dbReference>
<dbReference type="EMBL" id="BT000666">
    <property type="protein sequence ID" value="AAN31813.1"/>
    <property type="molecule type" value="mRNA"/>
</dbReference>
<dbReference type="RefSeq" id="NP_197697.1">
    <property type="nucleotide sequence ID" value="NM_122212.5"/>
</dbReference>
<dbReference type="SMR" id="Q9FN48"/>
<dbReference type="BioGRID" id="17645">
    <property type="interactions" value="8"/>
</dbReference>
<dbReference type="FunCoup" id="Q9FN48">
    <property type="interactions" value="1233"/>
</dbReference>
<dbReference type="IntAct" id="Q9FN48">
    <property type="interactions" value="7"/>
</dbReference>
<dbReference type="MINT" id="Q9FN48"/>
<dbReference type="STRING" id="3702.Q9FN48"/>
<dbReference type="iPTMnet" id="Q9FN48"/>
<dbReference type="PaxDb" id="3702-AT5G23060.1"/>
<dbReference type="ProteomicsDB" id="240284"/>
<dbReference type="EnsemblPlants" id="AT5G23060.1">
    <property type="protein sequence ID" value="AT5G23060.1"/>
    <property type="gene ID" value="AT5G23060"/>
</dbReference>
<dbReference type="GeneID" id="832370"/>
<dbReference type="Gramene" id="AT5G23060.1">
    <property type="protein sequence ID" value="AT5G23060.1"/>
    <property type="gene ID" value="AT5G23060"/>
</dbReference>
<dbReference type="KEGG" id="ath:AT5G23060"/>
<dbReference type="Araport" id="AT5G23060"/>
<dbReference type="TAIR" id="AT5G23060">
    <property type="gene designation" value="CAS"/>
</dbReference>
<dbReference type="eggNOG" id="ENOG502QSV6">
    <property type="taxonomic scope" value="Eukaryota"/>
</dbReference>
<dbReference type="HOGENOM" id="CLU_040238_1_1_1"/>
<dbReference type="InParanoid" id="Q9FN48"/>
<dbReference type="OMA" id="NCWIMAD"/>
<dbReference type="OrthoDB" id="2015023at2759"/>
<dbReference type="PhylomeDB" id="Q9FN48"/>
<dbReference type="CD-CODE" id="4299E36E">
    <property type="entry name" value="Nucleolus"/>
</dbReference>
<dbReference type="PRO" id="PR:Q9FN48"/>
<dbReference type="Proteomes" id="UP000006548">
    <property type="component" value="Chromosome 5"/>
</dbReference>
<dbReference type="ExpressionAtlas" id="Q9FN48">
    <property type="expression patterns" value="baseline and differential"/>
</dbReference>
<dbReference type="GO" id="GO:0009507">
    <property type="term" value="C:chloroplast"/>
    <property type="evidence" value="ECO:0000314"/>
    <property type="project" value="TAIR"/>
</dbReference>
<dbReference type="GO" id="GO:0009534">
    <property type="term" value="C:chloroplast thylakoid"/>
    <property type="evidence" value="ECO:0007005"/>
    <property type="project" value="TAIR"/>
</dbReference>
<dbReference type="GO" id="GO:0009535">
    <property type="term" value="C:chloroplast thylakoid membrane"/>
    <property type="evidence" value="ECO:0007005"/>
    <property type="project" value="TAIR"/>
</dbReference>
<dbReference type="GO" id="GO:0005739">
    <property type="term" value="C:mitochondrion"/>
    <property type="evidence" value="ECO:0007005"/>
    <property type="project" value="TAIR"/>
</dbReference>
<dbReference type="GO" id="GO:0009536">
    <property type="term" value="C:plastid"/>
    <property type="evidence" value="ECO:0007005"/>
    <property type="project" value="TAIR"/>
</dbReference>
<dbReference type="GO" id="GO:0009579">
    <property type="term" value="C:thylakoid"/>
    <property type="evidence" value="ECO:0000314"/>
    <property type="project" value="TAIR"/>
</dbReference>
<dbReference type="GO" id="GO:0071277">
    <property type="term" value="P:cellular response to calcium ion"/>
    <property type="evidence" value="ECO:0000315"/>
    <property type="project" value="UniProtKB"/>
</dbReference>
<dbReference type="GO" id="GO:0009704">
    <property type="term" value="P:de-etiolation"/>
    <property type="evidence" value="ECO:0000315"/>
    <property type="project" value="UniProtKB"/>
</dbReference>
<dbReference type="GO" id="GO:0090333">
    <property type="term" value="P:regulation of stomatal closure"/>
    <property type="evidence" value="ECO:0000315"/>
    <property type="project" value="TAIR"/>
</dbReference>
<dbReference type="CDD" id="cd00158">
    <property type="entry name" value="RHOD"/>
    <property type="match status" value="1"/>
</dbReference>
<dbReference type="Gene3D" id="3.40.250.10">
    <property type="entry name" value="Rhodanese-like domain"/>
    <property type="match status" value="1"/>
</dbReference>
<dbReference type="InterPro" id="IPR044690">
    <property type="entry name" value="CAS_plant"/>
</dbReference>
<dbReference type="InterPro" id="IPR001763">
    <property type="entry name" value="Rhodanese-like_dom"/>
</dbReference>
<dbReference type="InterPro" id="IPR036873">
    <property type="entry name" value="Rhodanese-like_dom_sf"/>
</dbReference>
<dbReference type="PANTHER" id="PTHR34209:SF1">
    <property type="entry name" value="CALCIUM SENSING RECEPTOR, CHLOROPLASTIC"/>
    <property type="match status" value="1"/>
</dbReference>
<dbReference type="PANTHER" id="PTHR34209">
    <property type="entry name" value="RHODANESE/CELL CYCLE CONTROL PHOSPHATASE SUPERFAMILY PROTEIN"/>
    <property type="match status" value="1"/>
</dbReference>
<dbReference type="Pfam" id="PF00581">
    <property type="entry name" value="Rhodanese"/>
    <property type="match status" value="1"/>
</dbReference>
<dbReference type="SUPFAM" id="SSF52821">
    <property type="entry name" value="Rhodanese/Cell cycle control phosphatase"/>
    <property type="match status" value="1"/>
</dbReference>
<dbReference type="PROSITE" id="PS50206">
    <property type="entry name" value="RHODANESE_3"/>
    <property type="match status" value="1"/>
</dbReference>
<organism>
    <name type="scientific">Arabidopsis thaliana</name>
    <name type="common">Mouse-ear cress</name>
    <dbReference type="NCBI Taxonomy" id="3702"/>
    <lineage>
        <taxon>Eukaryota</taxon>
        <taxon>Viridiplantae</taxon>
        <taxon>Streptophyta</taxon>
        <taxon>Embryophyta</taxon>
        <taxon>Tracheophyta</taxon>
        <taxon>Spermatophyta</taxon>
        <taxon>Magnoliopsida</taxon>
        <taxon>eudicotyledons</taxon>
        <taxon>Gunneridae</taxon>
        <taxon>Pentapetalae</taxon>
        <taxon>rosids</taxon>
        <taxon>malvids</taxon>
        <taxon>Brassicales</taxon>
        <taxon>Brassicaceae</taxon>
        <taxon>Camelineae</taxon>
        <taxon>Arabidopsis</taxon>
    </lineage>
</organism>
<proteinExistence type="evidence at protein level"/>
<keyword id="KW-0150">Chloroplast</keyword>
<keyword id="KW-0472">Membrane</keyword>
<keyword id="KW-0597">Phosphoprotein</keyword>
<keyword id="KW-0934">Plastid</keyword>
<keyword id="KW-0675">Receptor</keyword>
<keyword id="KW-1185">Reference proteome</keyword>
<keyword id="KW-0793">Thylakoid</keyword>
<keyword id="KW-0809">Transit peptide</keyword>
<keyword id="KW-0812">Transmembrane</keyword>
<keyword id="KW-1133">Transmembrane helix</keyword>
<feature type="transit peptide" description="Chloroplast" evidence="1">
    <location>
        <begin position="1"/>
        <end position="33"/>
    </location>
</feature>
<feature type="chain" id="PRO_0000401137" description="Calcium sensing receptor, chloroplastic">
    <location>
        <begin position="34"/>
        <end position="387"/>
    </location>
</feature>
<feature type="topological domain" description="Lumenal, thylakoid" evidence="1">
    <location>
        <begin position="34"/>
        <end position="186"/>
    </location>
</feature>
<feature type="transmembrane region" description="Helical" evidence="1">
    <location>
        <begin position="187"/>
        <end position="207"/>
    </location>
</feature>
<feature type="topological domain" description="Stromal" evidence="1">
    <location>
        <begin position="208"/>
        <end position="387"/>
    </location>
</feature>
<feature type="domain" description="Rhodanese" evidence="2">
    <location>
        <begin position="231"/>
        <end position="352"/>
    </location>
</feature>
<feature type="modified residue" description="Phosphothreonine" evidence="5">
    <location>
        <position position="380"/>
    </location>
</feature>
<protein>
    <recommendedName>
        <fullName>Calcium sensing receptor, chloroplastic</fullName>
    </recommendedName>
    <alternativeName>
        <fullName>Sulfurtransferase 3</fullName>
        <shortName>AtStr3</shortName>
    </alternativeName>
</protein>
<name>CAS_ARATH</name>
<reference key="1">
    <citation type="journal article" date="2003" name="Nature">
        <title>A cell surface receptor mediates extracellular Ca(2+) sensing in guard cells.</title>
        <authorList>
            <person name="Han S."/>
            <person name="Tang R."/>
            <person name="Anderson L.K."/>
            <person name="Woerner T.E."/>
            <person name="Pei Z.M."/>
        </authorList>
    </citation>
    <scope>NUCLEOTIDE SEQUENCE [MRNA]</scope>
    <scope>FUNCTION</scope>
    <scope>TISSUE SPECIFICITY</scope>
</reference>
<reference key="2">
    <citation type="journal article" date="1997" name="DNA Res.">
        <title>Structural analysis of Arabidopsis thaliana chromosome 5. II. Sequence features of the regions of 1,044,062 bp covered by thirteen physically assigned P1 clones.</title>
        <authorList>
            <person name="Kotani H."/>
            <person name="Nakamura Y."/>
            <person name="Sato S."/>
            <person name="Kaneko T."/>
            <person name="Asamizu E."/>
            <person name="Miyajima N."/>
            <person name="Tabata S."/>
        </authorList>
    </citation>
    <scope>NUCLEOTIDE SEQUENCE [LARGE SCALE GENOMIC DNA]</scope>
    <source>
        <strain>cv. Columbia</strain>
    </source>
</reference>
<reference key="3">
    <citation type="journal article" date="2017" name="Plant J.">
        <title>Araport11: a complete reannotation of the Arabidopsis thaliana reference genome.</title>
        <authorList>
            <person name="Cheng C.Y."/>
            <person name="Krishnakumar V."/>
            <person name="Chan A.P."/>
            <person name="Thibaud-Nissen F."/>
            <person name="Schobel S."/>
            <person name="Town C.D."/>
        </authorList>
    </citation>
    <scope>GENOME REANNOTATION</scope>
    <source>
        <strain>cv. Columbia</strain>
    </source>
</reference>
<reference key="4">
    <citation type="journal article" date="2003" name="Science">
        <title>Empirical analysis of transcriptional activity in the Arabidopsis genome.</title>
        <authorList>
            <person name="Yamada K."/>
            <person name="Lim J."/>
            <person name="Dale J.M."/>
            <person name="Chen H."/>
            <person name="Shinn P."/>
            <person name="Palm C.J."/>
            <person name="Southwick A.M."/>
            <person name="Wu H.C."/>
            <person name="Kim C.J."/>
            <person name="Nguyen M."/>
            <person name="Pham P.K."/>
            <person name="Cheuk R.F."/>
            <person name="Karlin-Newmann G."/>
            <person name="Liu S.X."/>
            <person name="Lam B."/>
            <person name="Sakano H."/>
            <person name="Wu T."/>
            <person name="Yu G."/>
            <person name="Miranda M."/>
            <person name="Quach H.L."/>
            <person name="Tripp M."/>
            <person name="Chang C.H."/>
            <person name="Lee J.M."/>
            <person name="Toriumi M.J."/>
            <person name="Chan M.M."/>
            <person name="Tang C.C."/>
            <person name="Onodera C.S."/>
            <person name="Deng J.M."/>
            <person name="Akiyama K."/>
            <person name="Ansari Y."/>
            <person name="Arakawa T."/>
            <person name="Banh J."/>
            <person name="Banno F."/>
            <person name="Bowser L."/>
            <person name="Brooks S.Y."/>
            <person name="Carninci P."/>
            <person name="Chao Q."/>
            <person name="Choy N."/>
            <person name="Enju A."/>
            <person name="Goldsmith A.D."/>
            <person name="Gurjal M."/>
            <person name="Hansen N.F."/>
            <person name="Hayashizaki Y."/>
            <person name="Johnson-Hopson C."/>
            <person name="Hsuan V.W."/>
            <person name="Iida K."/>
            <person name="Karnes M."/>
            <person name="Khan S."/>
            <person name="Koesema E."/>
            <person name="Ishida J."/>
            <person name="Jiang P.X."/>
            <person name="Jones T."/>
            <person name="Kawai J."/>
            <person name="Kamiya A."/>
            <person name="Meyers C."/>
            <person name="Nakajima M."/>
            <person name="Narusaka M."/>
            <person name="Seki M."/>
            <person name="Sakurai T."/>
            <person name="Satou M."/>
            <person name="Tamse R."/>
            <person name="Vaysberg M."/>
            <person name="Wallender E.K."/>
            <person name="Wong C."/>
            <person name="Yamamura Y."/>
            <person name="Yuan S."/>
            <person name="Shinozaki K."/>
            <person name="Davis R.W."/>
            <person name="Theologis A."/>
            <person name="Ecker J.R."/>
        </authorList>
    </citation>
    <scope>NUCLEOTIDE SEQUENCE [LARGE SCALE MRNA]</scope>
    <source>
        <strain>cv. Columbia</strain>
    </source>
</reference>
<reference key="5">
    <citation type="journal article" date="2007" name="Mol. Cell. Proteomics">
        <title>Multidimensional protein identification technology (MudPIT) analysis of ubiquitinated proteins in plants.</title>
        <authorList>
            <person name="Maor R."/>
            <person name="Jones A."/>
            <person name="Nuehse T.S."/>
            <person name="Studholme D.J."/>
            <person name="Peck S.C."/>
            <person name="Shirasu K."/>
        </authorList>
    </citation>
    <scope>IDENTIFICATION BY MASS SPECTROMETRY [LARGE SCALE ANALYSIS]</scope>
    <source>
        <strain>cv. Landsberg erecta</strain>
    </source>
</reference>
<reference key="6">
    <citation type="journal article" date="2008" name="FEBS J.">
        <title>Light regulation of CaS, a novel phosphoprotein in the thylakoid membrane of Arabidopsis thaliana.</title>
        <authorList>
            <person name="Vainonen J.P."/>
            <person name="Sakuragi Y."/>
            <person name="Stael S."/>
            <person name="Tikkanen M."/>
            <person name="Allahverdiyeva Y."/>
            <person name="Paakkarinen V."/>
            <person name="Aro E."/>
            <person name="Suorsa M."/>
            <person name="Scheller H.V."/>
            <person name="Vener A.V."/>
            <person name="Aro E.M."/>
        </authorList>
    </citation>
    <scope>SUBCELLULAR LOCATION</scope>
    <scope>PHOSPHORYLATION AT THR-380</scope>
    <scope>DISRUPTION PHENOTYPE</scope>
</reference>
<reference key="7">
    <citation type="journal article" date="2008" name="New Phytol.">
        <title>A plastid protein crucial for Ca2+-regulated stomatal responses.</title>
        <authorList>
            <person name="Weinl S."/>
            <person name="Held K."/>
            <person name="Schluecking K."/>
            <person name="Steinhorst L."/>
            <person name="Kuhlgert S."/>
            <person name="Hippler M."/>
            <person name="Kudla J."/>
        </authorList>
    </citation>
    <scope>FUNCTION</scope>
    <scope>SUBCELLULAR LOCATION</scope>
</reference>
<reference key="8">
    <citation type="journal article" date="2007" name="Plant Physiol. Biochem.">
        <title>Differential expression of Arabidopsis sulfurtransferases under various growth conditions.</title>
        <authorList>
            <person name="Bartels A."/>
            <person name="Mock H.P."/>
            <person name="Papenbrock J."/>
        </authorList>
    </citation>
    <scope>GENE FAMILY</scope>
</reference>
<reference key="9">
    <citation type="journal article" date="2007" name="Science">
        <title>Coupling diurnal cytosolic Ca2+ oscillations to the CAS-IP3 pathway in Arabidopsis.</title>
        <authorList>
            <person name="Tang R.H."/>
            <person name="Han S."/>
            <person name="Zheng H."/>
            <person name="Cook C.W."/>
            <person name="Choi C.S."/>
            <person name="Woerner T.E."/>
            <person name="Jackson R.B."/>
            <person name="Pei Z.M."/>
        </authorList>
    </citation>
    <scope>FUNCTION</scope>
</reference>
<reference key="10">
    <citation type="journal article" date="2009" name="J. Proteomics">
        <title>Phosphoproteomic analysis of nuclei-enriched fractions from Arabidopsis thaliana.</title>
        <authorList>
            <person name="Jones A.M.E."/>
            <person name="MacLean D."/>
            <person name="Studholme D.J."/>
            <person name="Serna-Sanz A."/>
            <person name="Andreasson E."/>
            <person name="Rathjen J.P."/>
            <person name="Peck S.C."/>
        </authorList>
    </citation>
    <scope>IDENTIFICATION BY MASS SPECTROMETRY [LARGE SCALE ANALYSIS]</scope>
    <source>
        <strain>cv. Columbia</strain>
    </source>
</reference>
<reference key="11">
    <citation type="journal article" date="2009" name="Plant Physiol.">
        <title>Large-scale Arabidopsis phosphoproteome profiling reveals novel chloroplast kinase substrates and phosphorylation networks.</title>
        <authorList>
            <person name="Reiland S."/>
            <person name="Messerli G."/>
            <person name="Baerenfaller K."/>
            <person name="Gerrits B."/>
            <person name="Endler A."/>
            <person name="Grossmann J."/>
            <person name="Gruissem W."/>
            <person name="Baginsky S."/>
        </authorList>
    </citation>
    <scope>IDENTIFICATION BY MASS SPECTROMETRY [LARGE SCALE ANALYSIS]</scope>
</reference>
<reference key="12">
    <citation type="journal article" date="2012" name="J. Exp. Bot.">
        <title>Calcium-sensing receptor regulates stomatal closure through hydrogen peroxide and nitric oxide in response to extracellular calcium in Arabidopsis.</title>
        <authorList>
            <person name="Wang W.H."/>
            <person name="Yi X.Q."/>
            <person name="Han A.D."/>
            <person name="Liu T.W."/>
            <person name="Chen J."/>
            <person name="Wu F.H."/>
            <person name="Dong X.J."/>
            <person name="He J.X."/>
            <person name="Pei Z.M."/>
            <person name="Zheng H.L."/>
        </authorList>
    </citation>
    <scope>FUNCTION</scope>
</reference>
<reference key="13">
    <citation type="journal article" date="2012" name="Physiol. Plantarum">
        <title>Calcium and calcium receptor CAS promote Arabidopsis thaliana de-etiolation.</title>
        <authorList>
            <person name="Huang S.S."/>
            <person name="Chen J."/>
            <person name="Dong X.J."/>
            <person name="Patton J."/>
            <person name="Pei Z.M."/>
            <person name="Zheng H.L."/>
        </authorList>
    </citation>
    <scope>FUNCTION</scope>
    <scope>INDUCTION BY CALCIUM</scope>
</reference>
<evidence type="ECO:0000255" key="1"/>
<evidence type="ECO:0000255" key="2">
    <source>
        <dbReference type="PROSITE-ProRule" id="PRU00173"/>
    </source>
</evidence>
<evidence type="ECO:0000269" key="3">
    <source>
    </source>
</evidence>
<evidence type="ECO:0000269" key="4">
    <source>
    </source>
</evidence>
<evidence type="ECO:0000269" key="5">
    <source>
    </source>
</evidence>
<evidence type="ECO:0000269" key="6">
    <source>
    </source>
</evidence>
<evidence type="ECO:0000269" key="7">
    <source>
    </source>
</evidence>
<evidence type="ECO:0000269" key="8">
    <source>
    </source>
</evidence>
<evidence type="ECO:0000305" key="9">
    <source>
    </source>
</evidence>
<comment type="function">
    <text evidence="3 4 6 7 8">Modulates cytoplasmic Ca(2+) concentration and is crucial for proper stomatal regulation in response to elevated levels of external Ca(2+). May function by regulating concentrations of inositol 1,4,5-trisphosphate (IP3), which in turn triggers release of Ca(2+) from internal stores. May play a role in de-etiolation.</text>
</comment>
<comment type="subcellular location">
    <subcellularLocation>
        <location evidence="5 6">Plastid</location>
        <location evidence="5 6">Chloroplast thylakoid membrane</location>
        <topology evidence="5 6">Single-pass membrane protein</topology>
        <orientation evidence="5 6">Stromal side</orientation>
    </subcellularLocation>
</comment>
<comment type="tissue specificity">
    <text evidence="3">Predominantly expressed in the shoot, including guard cells.</text>
</comment>
<comment type="induction">
    <text evidence="7">By Ca(2+) (at protein level).</text>
</comment>
<comment type="PTM">
    <text evidence="5">Phosphorylation seems to be light-dependent.</text>
</comment>
<comment type="disruption phenotype">
    <text evidence="5">Reduced growth.</text>
</comment>
<comment type="miscellaneous">
    <text evidence="9">Plants silencing CAS show reduced chlorophyll content and early bolting.</text>
</comment>